<reference key="1">
    <citation type="journal article" date="1993" name="Biochem. Biophys. Res. Commun.">
        <title>Facile cloning and sequence analysis of goose delta-crystallin gene based on polymerase chain reaction.</title>
        <authorList>
            <person name="Yu C.W."/>
            <person name="Chiou S.-H."/>
        </authorList>
    </citation>
    <scope>NUCLEOTIDE SEQUENCE [MRNA]</scope>
    <scope>TISSUE SPECIFICITY</scope>
    <source>
        <tissue>Lens</tissue>
    </source>
</reference>
<reference key="2">
    <citation type="journal article" date="2005" name="Biochem. J.">
        <title>The effect of N-terminal truncation on double-dimer assembly of goose delta-crystallin.</title>
        <authorList>
            <person name="Lee H.J."/>
            <person name="Lai Y.H."/>
            <person name="Wu S.Y."/>
            <person name="Chen Y.H."/>
        </authorList>
    </citation>
    <scope>X-RAY CRYSTALLOGRAPHY (2.8 ANGSTROMS) OF 2-466</scope>
    <scope>CATALYTIC ACTIVITY</scope>
    <scope>BIOPHYSICOCHEMICAL PROPERTIES</scope>
</reference>
<gene>
    <name type="primary">ASL</name>
</gene>
<name>ARLY_ANSAN</name>
<sequence length="466" mass="51372">MASEGDKLMGGRFVGSTDPIMQMLSTSMSTEQRLSEVDIQASIAYAKALEKAGILTKTELEKILSGLEKISEEWSKGVFVVTQSDEDIHTANERRLKELIGDIAGKLNTGRSRNEQVVTDLKLFMKNSLSVISTHLLQLIKTLVERAAIEIDVILPGYTHLQKAQPIRWSQFLLSHAVALTRDSERLGEVKRRINVLPLGSGALAGNPLDIDREMLRSELDFASISLNSMDAISERDFVVEFLSVATLLMIHLSKMAEDLIIYSTSEFGFLTLSDAFSTGSSLMPQKKNPDSLELIRSKAGRVFGRLASILMVLKGLPSTYNKDLQEDKEAVFDVVDTLTAVLQVATGVISTLQISKENMEKALTPEMLSTDLALYLVRKGMPFRQAHTASGKAVHLAETKGITINNLTLEDLKSISPLFSSDVSQVFNFVNSVEQYTAMGGTAKSSVTTQIEHLRELMKKQKEQA</sequence>
<protein>
    <recommendedName>
        <fullName>Argininosuccinate lyase</fullName>
        <shortName>ASAL</shortName>
        <ecNumber>4.3.2.1</ecNumber>
    </recommendedName>
    <alternativeName>
        <fullName>Arginosuccinase</fullName>
    </alternativeName>
    <alternativeName>
        <fullName>Delta crystallin</fullName>
    </alternativeName>
</protein>
<comment type="function">
    <text>Delta crystallin, the principal crystallin in embryonic lens, is found only in birds and reptiles. This protein also functions as an enzymatically active argininosuccinate lyase.</text>
</comment>
<comment type="catalytic activity">
    <reaction evidence="2">
        <text>2-(N(omega)-L-arginino)succinate = fumarate + L-arginine</text>
        <dbReference type="Rhea" id="RHEA:24020"/>
        <dbReference type="ChEBI" id="CHEBI:29806"/>
        <dbReference type="ChEBI" id="CHEBI:32682"/>
        <dbReference type="ChEBI" id="CHEBI:57472"/>
        <dbReference type="EC" id="4.3.2.1"/>
    </reaction>
</comment>
<comment type="biophysicochemical properties">
    <kinetics>
        <Vmax evidence="2">19.0 nmol/min/mg enzyme</Vmax>
    </kinetics>
</comment>
<comment type="pathway">
    <text>Amino-acid biosynthesis; L-arginine biosynthesis; L-arginine from L-ornithine and carbamoyl phosphate: step 3/3.</text>
</comment>
<comment type="subunit">
    <text>Homotetramer.</text>
</comment>
<comment type="tissue specificity">
    <text evidence="3">Eye lens.</text>
</comment>
<comment type="similarity">
    <text evidence="4">Belongs to the lyase 1 family. Argininosuccinate lyase subfamily.</text>
</comment>
<evidence type="ECO:0000250" key="1">
    <source>
        <dbReference type="UniProtKB" id="P24058"/>
    </source>
</evidence>
<evidence type="ECO:0000269" key="2">
    <source>
    </source>
</evidence>
<evidence type="ECO:0000269" key="3">
    <source>
    </source>
</evidence>
<evidence type="ECO:0000305" key="4"/>
<evidence type="ECO:0007829" key="5">
    <source>
        <dbReference type="PDB" id="1XWO"/>
    </source>
</evidence>
<accession>P33110</accession>
<dbReference type="EC" id="4.3.2.1"/>
<dbReference type="EMBL" id="X70855">
    <property type="protein sequence ID" value="CAA50208.1"/>
    <property type="molecule type" value="mRNA"/>
</dbReference>
<dbReference type="PIR" id="JN0486">
    <property type="entry name" value="JN0486"/>
</dbReference>
<dbReference type="PDB" id="1XWO">
    <property type="method" value="X-ray"/>
    <property type="resolution" value="2.80 A"/>
    <property type="chains" value="A/B/C/D=2-466"/>
</dbReference>
<dbReference type="PDBsum" id="1XWO"/>
<dbReference type="SMR" id="P33110"/>
<dbReference type="UniPathway" id="UPA00068">
    <property type="reaction ID" value="UER00114"/>
</dbReference>
<dbReference type="EvolutionaryTrace" id="P33110"/>
<dbReference type="GO" id="GO:0005829">
    <property type="term" value="C:cytosol"/>
    <property type="evidence" value="ECO:0007669"/>
    <property type="project" value="TreeGrafter"/>
</dbReference>
<dbReference type="GO" id="GO:0004056">
    <property type="term" value="F:argininosuccinate lyase activity"/>
    <property type="evidence" value="ECO:0000314"/>
    <property type="project" value="UniProtKB"/>
</dbReference>
<dbReference type="GO" id="GO:0005212">
    <property type="term" value="F:structural constituent of eye lens"/>
    <property type="evidence" value="ECO:0000304"/>
    <property type="project" value="UniProtKB"/>
</dbReference>
<dbReference type="GO" id="GO:0042450">
    <property type="term" value="P:arginine biosynthetic process via ornithine"/>
    <property type="evidence" value="ECO:0007669"/>
    <property type="project" value="InterPro"/>
</dbReference>
<dbReference type="GO" id="GO:0006526">
    <property type="term" value="P:L-arginine biosynthetic process"/>
    <property type="evidence" value="ECO:0000304"/>
    <property type="project" value="UniProtKB"/>
</dbReference>
<dbReference type="CDD" id="cd01359">
    <property type="entry name" value="Argininosuccinate_lyase"/>
    <property type="match status" value="1"/>
</dbReference>
<dbReference type="FunFam" id="1.10.275.10:FF:000002">
    <property type="entry name" value="Argininosuccinate lyase"/>
    <property type="match status" value="1"/>
</dbReference>
<dbReference type="FunFam" id="1.10.40.30:FF:000001">
    <property type="entry name" value="Argininosuccinate lyase"/>
    <property type="match status" value="1"/>
</dbReference>
<dbReference type="FunFam" id="1.20.200.10:FF:000002">
    <property type="entry name" value="Argininosuccinate lyase"/>
    <property type="match status" value="1"/>
</dbReference>
<dbReference type="FunFam" id="1.20.200.10:FF:000015">
    <property type="entry name" value="argininosuccinate lyase isoform X2"/>
    <property type="match status" value="1"/>
</dbReference>
<dbReference type="Gene3D" id="1.10.40.30">
    <property type="entry name" value="Fumarase/aspartase (C-terminal domain)"/>
    <property type="match status" value="1"/>
</dbReference>
<dbReference type="Gene3D" id="1.20.200.10">
    <property type="entry name" value="Fumarase/aspartase (Central domain)"/>
    <property type="match status" value="1"/>
</dbReference>
<dbReference type="Gene3D" id="1.10.275.10">
    <property type="entry name" value="Fumarase/aspartase (N-terminal domain)"/>
    <property type="match status" value="1"/>
</dbReference>
<dbReference type="HAMAP" id="MF_00006">
    <property type="entry name" value="Arg_succ_lyase"/>
    <property type="match status" value="1"/>
</dbReference>
<dbReference type="InterPro" id="IPR029419">
    <property type="entry name" value="Arg_succ_lyase_C"/>
</dbReference>
<dbReference type="InterPro" id="IPR009049">
    <property type="entry name" value="Argininosuccinate_lyase"/>
</dbReference>
<dbReference type="InterPro" id="IPR024083">
    <property type="entry name" value="Fumarase/histidase_N"/>
</dbReference>
<dbReference type="InterPro" id="IPR020557">
    <property type="entry name" value="Fumarate_lyase_CS"/>
</dbReference>
<dbReference type="InterPro" id="IPR000362">
    <property type="entry name" value="Fumarate_lyase_fam"/>
</dbReference>
<dbReference type="InterPro" id="IPR022761">
    <property type="entry name" value="Fumarate_lyase_N"/>
</dbReference>
<dbReference type="InterPro" id="IPR008948">
    <property type="entry name" value="L-Aspartase-like"/>
</dbReference>
<dbReference type="NCBIfam" id="TIGR00838">
    <property type="entry name" value="argH"/>
    <property type="match status" value="1"/>
</dbReference>
<dbReference type="PANTHER" id="PTHR43814">
    <property type="entry name" value="ARGININOSUCCINATE LYASE"/>
    <property type="match status" value="1"/>
</dbReference>
<dbReference type="PANTHER" id="PTHR43814:SF1">
    <property type="entry name" value="ARGININOSUCCINATE LYASE"/>
    <property type="match status" value="1"/>
</dbReference>
<dbReference type="Pfam" id="PF14698">
    <property type="entry name" value="ASL_C2"/>
    <property type="match status" value="1"/>
</dbReference>
<dbReference type="Pfam" id="PF00206">
    <property type="entry name" value="Lyase_1"/>
    <property type="match status" value="1"/>
</dbReference>
<dbReference type="PRINTS" id="PR00145">
    <property type="entry name" value="ARGSUCLYASE"/>
</dbReference>
<dbReference type="PRINTS" id="PR00149">
    <property type="entry name" value="FUMRATELYASE"/>
</dbReference>
<dbReference type="SUPFAM" id="SSF48557">
    <property type="entry name" value="L-aspartase-like"/>
    <property type="match status" value="1"/>
</dbReference>
<dbReference type="PROSITE" id="PS00163">
    <property type="entry name" value="FUMARATE_LYASES"/>
    <property type="match status" value="1"/>
</dbReference>
<organism>
    <name type="scientific">Anser anser anser</name>
    <name type="common">Western greylag goose</name>
    <dbReference type="NCBI Taxonomy" id="8844"/>
    <lineage>
        <taxon>Eukaryota</taxon>
        <taxon>Metazoa</taxon>
        <taxon>Chordata</taxon>
        <taxon>Craniata</taxon>
        <taxon>Vertebrata</taxon>
        <taxon>Euteleostomi</taxon>
        <taxon>Archelosauria</taxon>
        <taxon>Archosauria</taxon>
        <taxon>Dinosauria</taxon>
        <taxon>Saurischia</taxon>
        <taxon>Theropoda</taxon>
        <taxon>Coelurosauria</taxon>
        <taxon>Aves</taxon>
        <taxon>Neognathae</taxon>
        <taxon>Galloanserae</taxon>
        <taxon>Anseriformes</taxon>
        <taxon>Anatidae</taxon>
        <taxon>Anserinae</taxon>
        <taxon>Anser</taxon>
    </lineage>
</organism>
<keyword id="KW-0002">3D-structure</keyword>
<keyword id="KW-0028">Amino-acid biosynthesis</keyword>
<keyword id="KW-0055">Arginine biosynthesis</keyword>
<keyword id="KW-0273">Eye lens protein</keyword>
<keyword id="KW-0456">Lyase</keyword>
<proteinExistence type="evidence at protein level"/>
<feature type="chain" id="PRO_0000137718" description="Argininosuccinate lyase">
    <location>
        <begin position="1"/>
        <end position="466"/>
    </location>
</feature>
<feature type="active site" description="Proton acceptor" evidence="1">
    <location>
        <position position="160"/>
    </location>
</feature>
<feature type="active site" description="Proton donor" evidence="1">
    <location>
        <position position="281"/>
    </location>
</feature>
<feature type="binding site" description="in chain A" evidence="1">
    <location>
        <position position="27"/>
    </location>
    <ligand>
        <name>2-(N(omega)-L-arginino)succinate</name>
        <dbReference type="ChEBI" id="CHEBI:57472"/>
        <note>ligand shared between tetrameric partners</note>
    </ligand>
</feature>
<feature type="binding site" description="in chain A" evidence="1">
    <location>
        <position position="114"/>
    </location>
    <ligand>
        <name>2-(N(omega)-L-arginino)succinate</name>
        <dbReference type="ChEBI" id="CHEBI:57472"/>
        <note>ligand shared between tetrameric partners</note>
    </ligand>
</feature>
<feature type="binding site" description="in chain C" evidence="1">
    <location>
        <position position="159"/>
    </location>
    <ligand>
        <name>2-(N(omega)-L-arginino)succinate</name>
        <dbReference type="ChEBI" id="CHEBI:57472"/>
        <note>ligand shared between tetrameric partners</note>
    </ligand>
</feature>
<feature type="binding site" description="in chain B" evidence="1">
    <location>
        <position position="289"/>
    </location>
    <ligand>
        <name>2-(N(omega)-L-arginino)succinate</name>
        <dbReference type="ChEBI" id="CHEBI:57472"/>
        <note>ligand shared between tetrameric partners</note>
    </ligand>
</feature>
<feature type="binding site" description="in chain A" evidence="1">
    <location>
        <position position="321"/>
    </location>
    <ligand>
        <name>2-(N(omega)-L-arginino)succinate</name>
        <dbReference type="ChEBI" id="CHEBI:57472"/>
        <note>ligand shared between tetrameric partners</note>
    </ligand>
</feature>
<feature type="binding site" description="in chain A" evidence="1">
    <location>
        <position position="326"/>
    </location>
    <ligand>
        <name>2-(N(omega)-L-arginino)succinate</name>
        <dbReference type="ChEBI" id="CHEBI:57472"/>
        <note>ligand shared between tetrameric partners</note>
    </ligand>
</feature>
<feature type="binding site" description="in chain A" evidence="1">
    <location>
        <position position="329"/>
    </location>
    <ligand>
        <name>2-(N(omega)-L-arginino)succinate</name>
        <dbReference type="ChEBI" id="CHEBI:57472"/>
        <note>ligand shared between tetrameric partners</note>
    </ligand>
</feature>
<feature type="site" description="Increases basicity of active site His" evidence="1">
    <location>
        <position position="294"/>
    </location>
</feature>
<feature type="helix" evidence="5">
    <location>
        <begin position="21"/>
        <end position="23"/>
    </location>
</feature>
<feature type="helix" evidence="5">
    <location>
        <begin position="28"/>
        <end position="31"/>
    </location>
</feature>
<feature type="helix" evidence="5">
    <location>
        <begin position="32"/>
        <end position="34"/>
    </location>
</feature>
<feature type="helix" evidence="5">
    <location>
        <begin position="35"/>
        <end position="51"/>
    </location>
</feature>
<feature type="helix" evidence="5">
    <location>
        <begin position="57"/>
        <end position="75"/>
    </location>
</feature>
<feature type="helix" evidence="5">
    <location>
        <begin position="88"/>
        <end position="100"/>
    </location>
</feature>
<feature type="helix" evidence="5">
    <location>
        <begin position="103"/>
        <end position="108"/>
    </location>
</feature>
<feature type="helix" evidence="5">
    <location>
        <begin position="113"/>
        <end position="149"/>
    </location>
</feature>
<feature type="turn" evidence="5">
    <location>
        <begin position="150"/>
        <end position="152"/>
    </location>
</feature>
<feature type="strand" evidence="5">
    <location>
        <begin position="154"/>
        <end position="159"/>
    </location>
</feature>
<feature type="strand" evidence="5">
    <location>
        <begin position="162"/>
        <end position="168"/>
    </location>
</feature>
<feature type="helix" evidence="5">
    <location>
        <begin position="169"/>
        <end position="194"/>
    </location>
</feature>
<feature type="strand" evidence="5">
    <location>
        <begin position="195"/>
        <end position="197"/>
    </location>
</feature>
<feature type="turn" evidence="5">
    <location>
        <begin position="202"/>
        <end position="205"/>
    </location>
</feature>
<feature type="helix" evidence="5">
    <location>
        <begin position="213"/>
        <end position="219"/>
    </location>
</feature>
<feature type="strand" evidence="5">
    <location>
        <begin position="223"/>
        <end position="225"/>
    </location>
</feature>
<feature type="helix" evidence="5">
    <location>
        <begin position="229"/>
        <end position="234"/>
    </location>
</feature>
<feature type="helix" evidence="5">
    <location>
        <begin position="237"/>
        <end position="263"/>
    </location>
</feature>
<feature type="turn" evidence="5">
    <location>
        <begin position="266"/>
        <end position="268"/>
    </location>
</feature>
<feature type="strand" evidence="5">
    <location>
        <begin position="270"/>
        <end position="272"/>
    </location>
</feature>
<feature type="helix" evidence="5">
    <location>
        <begin position="275"/>
        <end position="277"/>
    </location>
</feature>
<feature type="helix" evidence="5">
    <location>
        <begin position="291"/>
        <end position="314"/>
    </location>
</feature>
<feature type="helix" evidence="5">
    <location>
        <begin position="323"/>
        <end position="327"/>
    </location>
</feature>
<feature type="helix" evidence="5">
    <location>
        <begin position="328"/>
        <end position="352"/>
    </location>
</feature>
<feature type="helix" evidence="5">
    <location>
        <begin position="357"/>
        <end position="362"/>
    </location>
</feature>
<feature type="helix" evidence="5">
    <location>
        <begin position="366"/>
        <end position="369"/>
    </location>
</feature>
<feature type="helix" evidence="5">
    <location>
        <begin position="370"/>
        <end position="378"/>
    </location>
</feature>
<feature type="turn" evidence="5">
    <location>
        <begin position="379"/>
        <end position="381"/>
    </location>
</feature>
<feature type="helix" evidence="5">
    <location>
        <begin position="384"/>
        <end position="401"/>
    </location>
</feature>
<feature type="helix" evidence="5">
    <location>
        <begin position="405"/>
        <end position="407"/>
    </location>
</feature>
<feature type="helix" evidence="5">
    <location>
        <begin position="410"/>
        <end position="416"/>
    </location>
</feature>
<feature type="helix" evidence="5">
    <location>
        <begin position="424"/>
        <end position="427"/>
    </location>
</feature>
<feature type="helix" evidence="5">
    <location>
        <begin position="430"/>
        <end position="435"/>
    </location>
</feature>
<feature type="strand" evidence="5">
    <location>
        <begin position="442"/>
        <end position="444"/>
    </location>
</feature>
<feature type="helix" evidence="5">
    <location>
        <begin position="445"/>
        <end position="461"/>
    </location>
</feature>